<dbReference type="EC" id="1.8.4.11" evidence="1"/>
<dbReference type="EMBL" id="CP000943">
    <property type="protein sequence ID" value="ACA16638.1"/>
    <property type="molecule type" value="Genomic_DNA"/>
</dbReference>
<dbReference type="RefSeq" id="WP_012332047.1">
    <property type="nucleotide sequence ID" value="NC_010511.1"/>
</dbReference>
<dbReference type="SMR" id="B0UCG5"/>
<dbReference type="STRING" id="426117.M446_2177"/>
<dbReference type="KEGG" id="met:M446_2177"/>
<dbReference type="eggNOG" id="COG0225">
    <property type="taxonomic scope" value="Bacteria"/>
</dbReference>
<dbReference type="HOGENOM" id="CLU_031040_10_3_5"/>
<dbReference type="GO" id="GO:0005737">
    <property type="term" value="C:cytoplasm"/>
    <property type="evidence" value="ECO:0007669"/>
    <property type="project" value="TreeGrafter"/>
</dbReference>
<dbReference type="GO" id="GO:0036456">
    <property type="term" value="F:L-methionine-(S)-S-oxide reductase activity"/>
    <property type="evidence" value="ECO:0007669"/>
    <property type="project" value="TreeGrafter"/>
</dbReference>
<dbReference type="GO" id="GO:0008113">
    <property type="term" value="F:peptide-methionine (S)-S-oxide reductase activity"/>
    <property type="evidence" value="ECO:0007669"/>
    <property type="project" value="UniProtKB-UniRule"/>
</dbReference>
<dbReference type="GO" id="GO:0034599">
    <property type="term" value="P:cellular response to oxidative stress"/>
    <property type="evidence" value="ECO:0007669"/>
    <property type="project" value="TreeGrafter"/>
</dbReference>
<dbReference type="GO" id="GO:0036211">
    <property type="term" value="P:protein modification process"/>
    <property type="evidence" value="ECO:0007669"/>
    <property type="project" value="UniProtKB-UniRule"/>
</dbReference>
<dbReference type="FunFam" id="3.30.1060.10:FF:000001">
    <property type="entry name" value="Peptide methionine sulfoxide reductase MsrA"/>
    <property type="match status" value="1"/>
</dbReference>
<dbReference type="Gene3D" id="3.30.1060.10">
    <property type="entry name" value="Peptide methionine sulphoxide reductase MsrA"/>
    <property type="match status" value="1"/>
</dbReference>
<dbReference type="HAMAP" id="MF_01401">
    <property type="entry name" value="MsrA"/>
    <property type="match status" value="1"/>
</dbReference>
<dbReference type="InterPro" id="IPR002569">
    <property type="entry name" value="Met_Sox_Rdtase_MsrA_dom"/>
</dbReference>
<dbReference type="InterPro" id="IPR036509">
    <property type="entry name" value="Met_Sox_Rdtase_MsrA_sf"/>
</dbReference>
<dbReference type="InterPro" id="IPR050162">
    <property type="entry name" value="MsrA_MetSO_reductase"/>
</dbReference>
<dbReference type="NCBIfam" id="TIGR00401">
    <property type="entry name" value="msrA"/>
    <property type="match status" value="1"/>
</dbReference>
<dbReference type="PANTHER" id="PTHR42799">
    <property type="entry name" value="MITOCHONDRIAL PEPTIDE METHIONINE SULFOXIDE REDUCTASE"/>
    <property type="match status" value="1"/>
</dbReference>
<dbReference type="PANTHER" id="PTHR42799:SF2">
    <property type="entry name" value="MITOCHONDRIAL PEPTIDE METHIONINE SULFOXIDE REDUCTASE"/>
    <property type="match status" value="1"/>
</dbReference>
<dbReference type="Pfam" id="PF01625">
    <property type="entry name" value="PMSR"/>
    <property type="match status" value="1"/>
</dbReference>
<dbReference type="SUPFAM" id="SSF55068">
    <property type="entry name" value="Peptide methionine sulfoxide reductase"/>
    <property type="match status" value="1"/>
</dbReference>
<sequence>MLFFRKRAEMPAPDQILPGRPTPLPTAERHFVNGRALKGPYPEGIETALFGLGCFWGAERKFWQLGDGIWVTAVGYAAGTTPNPTYEEVCTGLTGHNEVVLVAYDPAVLPFGQLLRTFWESHDPTQGMRQGNDVGTQYRSGLYVSDPERRAEAEASRDAYAQALRAKGFGSITTEIRDPGPFYFAEAYHQQYLAKNPAGYCGLGGTGVACPVGTGVRSAAE</sequence>
<reference key="1">
    <citation type="submission" date="2008-02" db="EMBL/GenBank/DDBJ databases">
        <title>Complete sequence of chromosome of Methylobacterium sp. 4-46.</title>
        <authorList>
            <consortium name="US DOE Joint Genome Institute"/>
            <person name="Copeland A."/>
            <person name="Lucas S."/>
            <person name="Lapidus A."/>
            <person name="Glavina del Rio T."/>
            <person name="Dalin E."/>
            <person name="Tice H."/>
            <person name="Bruce D."/>
            <person name="Goodwin L."/>
            <person name="Pitluck S."/>
            <person name="Chertkov O."/>
            <person name="Brettin T."/>
            <person name="Detter J.C."/>
            <person name="Han C."/>
            <person name="Kuske C.R."/>
            <person name="Schmutz J."/>
            <person name="Larimer F."/>
            <person name="Land M."/>
            <person name="Hauser L."/>
            <person name="Kyrpides N."/>
            <person name="Ivanova N."/>
            <person name="Marx C.J."/>
            <person name="Richardson P."/>
        </authorList>
    </citation>
    <scope>NUCLEOTIDE SEQUENCE [LARGE SCALE GENOMIC DNA]</scope>
    <source>
        <strain>4-46</strain>
    </source>
</reference>
<keyword id="KW-0560">Oxidoreductase</keyword>
<name>MSRA_METS4</name>
<gene>
    <name evidence="1" type="primary">msrA</name>
    <name type="ordered locus">M446_2177</name>
</gene>
<organism>
    <name type="scientific">Methylobacterium sp. (strain 4-46)</name>
    <dbReference type="NCBI Taxonomy" id="426117"/>
    <lineage>
        <taxon>Bacteria</taxon>
        <taxon>Pseudomonadati</taxon>
        <taxon>Pseudomonadota</taxon>
        <taxon>Alphaproteobacteria</taxon>
        <taxon>Hyphomicrobiales</taxon>
        <taxon>Methylobacteriaceae</taxon>
        <taxon>Methylobacterium</taxon>
    </lineage>
</organism>
<evidence type="ECO:0000255" key="1">
    <source>
        <dbReference type="HAMAP-Rule" id="MF_01401"/>
    </source>
</evidence>
<proteinExistence type="inferred from homology"/>
<feature type="chain" id="PRO_1000145415" description="Peptide methionine sulfoxide reductase MsrA">
    <location>
        <begin position="1"/>
        <end position="221"/>
    </location>
</feature>
<feature type="active site" evidence="1">
    <location>
        <position position="54"/>
    </location>
</feature>
<protein>
    <recommendedName>
        <fullName evidence="1">Peptide methionine sulfoxide reductase MsrA</fullName>
        <shortName evidence="1">Protein-methionine-S-oxide reductase</shortName>
        <ecNumber evidence="1">1.8.4.11</ecNumber>
    </recommendedName>
    <alternativeName>
        <fullName evidence="1">Peptide-methionine (S)-S-oxide reductase</fullName>
        <shortName evidence="1">Peptide Met(O) reductase</shortName>
    </alternativeName>
</protein>
<comment type="function">
    <text evidence="1">Has an important function as a repair enzyme for proteins that have been inactivated by oxidation. Catalyzes the reversible oxidation-reduction of methionine sulfoxide in proteins to methionine.</text>
</comment>
<comment type="catalytic activity">
    <reaction evidence="1">
        <text>L-methionyl-[protein] + [thioredoxin]-disulfide + H2O = L-methionyl-(S)-S-oxide-[protein] + [thioredoxin]-dithiol</text>
        <dbReference type="Rhea" id="RHEA:14217"/>
        <dbReference type="Rhea" id="RHEA-COMP:10698"/>
        <dbReference type="Rhea" id="RHEA-COMP:10700"/>
        <dbReference type="Rhea" id="RHEA-COMP:12313"/>
        <dbReference type="Rhea" id="RHEA-COMP:12315"/>
        <dbReference type="ChEBI" id="CHEBI:15377"/>
        <dbReference type="ChEBI" id="CHEBI:16044"/>
        <dbReference type="ChEBI" id="CHEBI:29950"/>
        <dbReference type="ChEBI" id="CHEBI:44120"/>
        <dbReference type="ChEBI" id="CHEBI:50058"/>
        <dbReference type="EC" id="1.8.4.11"/>
    </reaction>
</comment>
<comment type="catalytic activity">
    <reaction evidence="1">
        <text>[thioredoxin]-disulfide + L-methionine + H2O = L-methionine (S)-S-oxide + [thioredoxin]-dithiol</text>
        <dbReference type="Rhea" id="RHEA:19993"/>
        <dbReference type="Rhea" id="RHEA-COMP:10698"/>
        <dbReference type="Rhea" id="RHEA-COMP:10700"/>
        <dbReference type="ChEBI" id="CHEBI:15377"/>
        <dbReference type="ChEBI" id="CHEBI:29950"/>
        <dbReference type="ChEBI" id="CHEBI:50058"/>
        <dbReference type="ChEBI" id="CHEBI:57844"/>
        <dbReference type="ChEBI" id="CHEBI:58772"/>
        <dbReference type="EC" id="1.8.4.11"/>
    </reaction>
</comment>
<comment type="similarity">
    <text evidence="1">Belongs to the MsrA Met sulfoxide reductase family.</text>
</comment>
<accession>B0UCG5</accession>